<evidence type="ECO:0000269" key="1">
    <source>
    </source>
</evidence>
<evidence type="ECO:0000269" key="2">
    <source>
    </source>
</evidence>
<evidence type="ECO:0000269" key="3">
    <source>
    </source>
</evidence>
<evidence type="ECO:0000305" key="4"/>
<sequence length="173" mass="19973">MSFASRNIGRKIAGVGVDIVYLPRFAHILEKYSPFDPCGRSTLNKITRKFMHEKERFHFSNLLIEENCLTPRLHEYIAGVWALKECSLKALCCCVSKHDLPPAQVLYAGMLYKTQTDTGVPQLEFDKMFGKKYPKYQQLSKNYDSLFSTHEFLVSLSHDKDYLIAVTNLVERE</sequence>
<protein>
    <recommendedName>
        <fullName>Mitochondrial holo-[acyl-carrier-protein] synthase</fullName>
        <shortName>Mitochondrial holo-ACP synthase</shortName>
        <ecNumber>2.7.8.7</ecNumber>
    </recommendedName>
    <alternativeName>
        <fullName>4'-phosphopantetheinyl transferase PPT2</fullName>
        <shortName>PPTase</shortName>
    </alternativeName>
</protein>
<feature type="chain" id="PRO_0000175745" description="Mitochondrial holo-[acyl-carrier-protein] synthase">
    <location>
        <begin position="1"/>
        <end position="173"/>
    </location>
</feature>
<accession>Q12036</accession>
<accession>D6W3M1</accession>
<keyword id="KW-0275">Fatty acid biosynthesis</keyword>
<keyword id="KW-0276">Fatty acid metabolism</keyword>
<keyword id="KW-0444">Lipid biosynthesis</keyword>
<keyword id="KW-0443">Lipid metabolism</keyword>
<keyword id="KW-0496">Mitochondrion</keyword>
<keyword id="KW-1185">Reference proteome</keyword>
<keyword id="KW-0808">Transferase</keyword>
<reference key="1">
    <citation type="journal article" date="1998" name="J. Biol. Chem.">
        <title>A novel phosphopantetheine:protein transferase activating yeast mitochondrial acyl carrier protein.</title>
        <authorList>
            <person name="Stuible H.-P."/>
            <person name="Meier S."/>
            <person name="Wagner C."/>
            <person name="Hannappel E."/>
            <person name="Schweizer E."/>
        </authorList>
    </citation>
    <scope>NUCLEOTIDE SEQUENCE [GENOMIC DNA]</scope>
    <scope>FUNCTION</scope>
</reference>
<reference key="2">
    <citation type="journal article" date="1996" name="Yeast">
        <title>The sequence of 55 kb on the left arm of yeast chromosome XVI identifies a small nuclear RNA, a new putative protein kinase and two new putative regulators.</title>
        <authorList>
            <person name="Purnelle B."/>
            <person name="Coster F."/>
            <person name="Goffeau A."/>
        </authorList>
    </citation>
    <scope>NUCLEOTIDE SEQUENCE [GENOMIC DNA]</scope>
    <source>
        <strain>ATCC 204511 / S288c / AB972</strain>
    </source>
</reference>
<reference key="3">
    <citation type="journal article" date="1997" name="Nature">
        <title>The nucleotide sequence of Saccharomyces cerevisiae chromosome XVI.</title>
        <authorList>
            <person name="Bussey H."/>
            <person name="Storms R.K."/>
            <person name="Ahmed A."/>
            <person name="Albermann K."/>
            <person name="Allen E."/>
            <person name="Ansorge W."/>
            <person name="Araujo R."/>
            <person name="Aparicio A."/>
            <person name="Barrell B.G."/>
            <person name="Badcock K."/>
            <person name="Benes V."/>
            <person name="Botstein D."/>
            <person name="Bowman S."/>
            <person name="Brueckner M."/>
            <person name="Carpenter J."/>
            <person name="Cherry J.M."/>
            <person name="Chung E."/>
            <person name="Churcher C.M."/>
            <person name="Coster F."/>
            <person name="Davis K."/>
            <person name="Davis R.W."/>
            <person name="Dietrich F.S."/>
            <person name="Delius H."/>
            <person name="DiPaolo T."/>
            <person name="Dubois E."/>
            <person name="Duesterhoeft A."/>
            <person name="Duncan M."/>
            <person name="Floeth M."/>
            <person name="Fortin N."/>
            <person name="Friesen J.D."/>
            <person name="Fritz C."/>
            <person name="Goffeau A."/>
            <person name="Hall J."/>
            <person name="Hebling U."/>
            <person name="Heumann K."/>
            <person name="Hilbert H."/>
            <person name="Hillier L.W."/>
            <person name="Hunicke-Smith S."/>
            <person name="Hyman R.W."/>
            <person name="Johnston M."/>
            <person name="Kalman S."/>
            <person name="Kleine K."/>
            <person name="Komp C."/>
            <person name="Kurdi O."/>
            <person name="Lashkari D."/>
            <person name="Lew H."/>
            <person name="Lin A."/>
            <person name="Lin D."/>
            <person name="Louis E.J."/>
            <person name="Marathe R."/>
            <person name="Messenguy F."/>
            <person name="Mewes H.-W."/>
            <person name="Mirtipati S."/>
            <person name="Moestl D."/>
            <person name="Mueller-Auer S."/>
            <person name="Namath A."/>
            <person name="Nentwich U."/>
            <person name="Oefner P."/>
            <person name="Pearson D."/>
            <person name="Petel F.X."/>
            <person name="Pohl T.M."/>
            <person name="Purnelle B."/>
            <person name="Rajandream M.A."/>
            <person name="Rechmann S."/>
            <person name="Rieger M."/>
            <person name="Riles L."/>
            <person name="Roberts D."/>
            <person name="Schaefer M."/>
            <person name="Scharfe M."/>
            <person name="Scherens B."/>
            <person name="Schramm S."/>
            <person name="Schroeder M."/>
            <person name="Sdicu A.-M."/>
            <person name="Tettelin H."/>
            <person name="Urrestarazu L.A."/>
            <person name="Ushinsky S."/>
            <person name="Vierendeels F."/>
            <person name="Vissers S."/>
            <person name="Voss H."/>
            <person name="Walsh S.V."/>
            <person name="Wambutt R."/>
            <person name="Wang Y."/>
            <person name="Wedler E."/>
            <person name="Wedler H."/>
            <person name="Winnett E."/>
            <person name="Zhong W.-W."/>
            <person name="Zollner A."/>
            <person name="Vo D.H."/>
            <person name="Hani J."/>
        </authorList>
    </citation>
    <scope>NUCLEOTIDE SEQUENCE [LARGE SCALE GENOMIC DNA]</scope>
    <source>
        <strain>ATCC 204508 / S288c</strain>
    </source>
</reference>
<reference key="4">
    <citation type="journal article" date="2014" name="G3 (Bethesda)">
        <title>The reference genome sequence of Saccharomyces cerevisiae: Then and now.</title>
        <authorList>
            <person name="Engel S.R."/>
            <person name="Dietrich F.S."/>
            <person name="Fisk D.G."/>
            <person name="Binkley G."/>
            <person name="Balakrishnan R."/>
            <person name="Costanzo M.C."/>
            <person name="Dwight S.S."/>
            <person name="Hitz B.C."/>
            <person name="Karra K."/>
            <person name="Nash R.S."/>
            <person name="Weng S."/>
            <person name="Wong E.D."/>
            <person name="Lloyd P."/>
            <person name="Skrzypek M.S."/>
            <person name="Miyasato S.R."/>
            <person name="Simison M."/>
            <person name="Cherry J.M."/>
        </authorList>
    </citation>
    <scope>GENOME REANNOTATION</scope>
    <source>
        <strain>ATCC 204508 / S288c</strain>
    </source>
</reference>
<reference key="5">
    <citation type="journal article" date="2007" name="Genome Res.">
        <title>Approaching a complete repository of sequence-verified protein-encoding clones for Saccharomyces cerevisiae.</title>
        <authorList>
            <person name="Hu Y."/>
            <person name="Rolfs A."/>
            <person name="Bhullar B."/>
            <person name="Murthy T.V.S."/>
            <person name="Zhu C."/>
            <person name="Berger M.F."/>
            <person name="Camargo A.A."/>
            <person name="Kelley F."/>
            <person name="McCarron S."/>
            <person name="Jepson D."/>
            <person name="Richardson A."/>
            <person name="Raphael J."/>
            <person name="Moreira D."/>
            <person name="Taycher E."/>
            <person name="Zuo D."/>
            <person name="Mohr S."/>
            <person name="Kane M.F."/>
            <person name="Williamson J."/>
            <person name="Simpson A.J.G."/>
            <person name="Bulyk M.L."/>
            <person name="Harlow E."/>
            <person name="Marsischky G."/>
            <person name="Kolodner R.D."/>
            <person name="LaBaer J."/>
        </authorList>
    </citation>
    <scope>NUCLEOTIDE SEQUENCE [GENOMIC DNA]</scope>
    <source>
        <strain>ATCC 204508 / S288c</strain>
    </source>
</reference>
<reference key="6">
    <citation type="journal article" date="2003" name="Nature">
        <title>Sequencing and comparison of yeast species to identify genes and regulatory elements.</title>
        <authorList>
            <person name="Kellis M."/>
            <person name="Patterson N."/>
            <person name="Endrizzi M."/>
            <person name="Birren B.W."/>
            <person name="Lander E.S."/>
        </authorList>
    </citation>
    <scope>IDENTIFICATION OF PROBABLE INITIATION SITE</scope>
</reference>
<reference key="7">
    <citation type="journal article" date="2003" name="Nature">
        <title>Global analysis of protein expression in yeast.</title>
        <authorList>
            <person name="Ghaemmaghami S."/>
            <person name="Huh W.-K."/>
            <person name="Bower K."/>
            <person name="Howson R.W."/>
            <person name="Belle A."/>
            <person name="Dephoure N."/>
            <person name="O'Shea E.K."/>
            <person name="Weissman J.S."/>
        </authorList>
    </citation>
    <scope>LEVEL OF PROTEIN EXPRESSION [LARGE SCALE ANALYSIS]</scope>
</reference>
<reference key="8">
    <citation type="journal article" date="2006" name="J. Proteome Res.">
        <title>Toward the complete yeast mitochondrial proteome: multidimensional separation techniques for mitochondrial proteomics.</title>
        <authorList>
            <person name="Reinders J."/>
            <person name="Zahedi R.P."/>
            <person name="Pfanner N."/>
            <person name="Meisinger C."/>
            <person name="Sickmann A."/>
        </authorList>
    </citation>
    <scope>SUBCELLULAR LOCATION [LARGE SCALE ANALYSIS]</scope>
    <scope>IDENTIFICATION BY MASS SPECTROMETRY</scope>
</reference>
<comment type="function">
    <text evidence="3">Transfers the 4'-phosphopantetheine moiety from coenzyme A to a Ser of mitochondrial acyl-carrier-protein.</text>
</comment>
<comment type="catalytic activity">
    <reaction>
        <text>apo-[ACP] + CoA = holo-[ACP] + adenosine 3',5'-bisphosphate + H(+)</text>
        <dbReference type="Rhea" id="RHEA:12068"/>
        <dbReference type="Rhea" id="RHEA-COMP:9685"/>
        <dbReference type="Rhea" id="RHEA-COMP:9690"/>
        <dbReference type="ChEBI" id="CHEBI:15378"/>
        <dbReference type="ChEBI" id="CHEBI:29999"/>
        <dbReference type="ChEBI" id="CHEBI:57287"/>
        <dbReference type="ChEBI" id="CHEBI:58343"/>
        <dbReference type="ChEBI" id="CHEBI:64479"/>
        <dbReference type="EC" id="2.7.8.7"/>
    </reaction>
</comment>
<comment type="subcellular location">
    <subcellularLocation>
        <location evidence="2">Mitochondrion</location>
    </subcellularLocation>
</comment>
<comment type="miscellaneous">
    <text evidence="1">Present with 486 molecules/cell in log phase SD medium.</text>
</comment>
<comment type="similarity">
    <text evidence="4">Belongs to the P-Pant transferase superfamily. AcpS family.</text>
</comment>
<comment type="sequence caution" evidence="4">
    <conflict type="erroneous initiation">
        <sequence resource="EMBL-CDS" id="AAS56460"/>
    </conflict>
</comment>
<comment type="sequence caution" evidence="4">
    <conflict type="erroneous initiation">
        <sequence resource="EMBL-CDS" id="CAA65545"/>
    </conflict>
</comment>
<comment type="sequence caution" evidence="4">
    <conflict type="erroneous initiation">
        <sequence resource="EMBL-CDS" id="CAA76138"/>
    </conflict>
</comment>
<comment type="sequence caution" evidence="4">
    <conflict type="erroneous initiation">
        <sequence resource="EMBL-CDS" id="CAA97853"/>
    </conflict>
</comment>
<organism>
    <name type="scientific">Saccharomyces cerevisiae (strain ATCC 204508 / S288c)</name>
    <name type="common">Baker's yeast</name>
    <dbReference type="NCBI Taxonomy" id="559292"/>
    <lineage>
        <taxon>Eukaryota</taxon>
        <taxon>Fungi</taxon>
        <taxon>Dikarya</taxon>
        <taxon>Ascomycota</taxon>
        <taxon>Saccharomycotina</taxon>
        <taxon>Saccharomycetes</taxon>
        <taxon>Saccharomycetales</taxon>
        <taxon>Saccharomycetaceae</taxon>
        <taxon>Saccharomyces</taxon>
    </lineage>
</organism>
<proteinExistence type="evidence at protein level"/>
<gene>
    <name type="primary">PPT2</name>
    <name type="ordered locus">YPL148C</name>
    <name type="ORF">P2604</name>
</gene>
<name>PPT2_YEAST</name>
<dbReference type="EC" id="2.7.8.7"/>
<dbReference type="EMBL" id="Y16253">
    <property type="protein sequence ID" value="CAA76138.1"/>
    <property type="status" value="ALT_INIT"/>
    <property type="molecule type" value="Genomic_DNA"/>
</dbReference>
<dbReference type="EMBL" id="X96770">
    <property type="protein sequence ID" value="CAA65545.1"/>
    <property type="status" value="ALT_INIT"/>
    <property type="molecule type" value="Genomic_DNA"/>
</dbReference>
<dbReference type="EMBL" id="Z73504">
    <property type="protein sequence ID" value="CAA97853.1"/>
    <property type="status" value="ALT_INIT"/>
    <property type="molecule type" value="Genomic_DNA"/>
</dbReference>
<dbReference type="EMBL" id="AY558134">
    <property type="protein sequence ID" value="AAS56460.1"/>
    <property type="status" value="ALT_INIT"/>
    <property type="molecule type" value="Genomic_DNA"/>
</dbReference>
<dbReference type="EMBL" id="BK006949">
    <property type="protein sequence ID" value="DAA11287.1"/>
    <property type="molecule type" value="Genomic_DNA"/>
</dbReference>
<dbReference type="PIR" id="S65159">
    <property type="entry name" value="S65159"/>
</dbReference>
<dbReference type="RefSeq" id="NP_015177.2">
    <property type="nucleotide sequence ID" value="NM_001183962.1"/>
</dbReference>
<dbReference type="SMR" id="Q12036"/>
<dbReference type="BioGRID" id="36035">
    <property type="interactions" value="233"/>
</dbReference>
<dbReference type="FunCoup" id="Q12036">
    <property type="interactions" value="57"/>
</dbReference>
<dbReference type="IntAct" id="Q12036">
    <property type="interactions" value="6"/>
</dbReference>
<dbReference type="STRING" id="4932.YPL148C"/>
<dbReference type="PaxDb" id="4932-YPL148C"/>
<dbReference type="PeptideAtlas" id="Q12036"/>
<dbReference type="EnsemblFungi" id="YPL148C_mRNA">
    <property type="protein sequence ID" value="YPL148C"/>
    <property type="gene ID" value="YPL148C"/>
</dbReference>
<dbReference type="GeneID" id="855955"/>
<dbReference type="KEGG" id="sce:YPL148C"/>
<dbReference type="AGR" id="SGD:S000006069"/>
<dbReference type="SGD" id="S000006069">
    <property type="gene designation" value="PPT2"/>
</dbReference>
<dbReference type="VEuPathDB" id="FungiDB:YPL148C"/>
<dbReference type="eggNOG" id="ENOG502S43T">
    <property type="taxonomic scope" value="Eukaryota"/>
</dbReference>
<dbReference type="HOGENOM" id="CLU_089696_4_1_1"/>
<dbReference type="InParanoid" id="Q12036"/>
<dbReference type="OMA" id="GVWATKE"/>
<dbReference type="OrthoDB" id="15433at2759"/>
<dbReference type="BioCyc" id="YEAST:G3O-34045-MONOMER"/>
<dbReference type="BRENDA" id="2.7.8.7">
    <property type="organism ID" value="984"/>
</dbReference>
<dbReference type="BioGRID-ORCS" id="855955">
    <property type="hits" value="0 hits in 10 CRISPR screens"/>
</dbReference>
<dbReference type="PRO" id="PR:Q12036"/>
<dbReference type="Proteomes" id="UP000002311">
    <property type="component" value="Chromosome XVI"/>
</dbReference>
<dbReference type="RNAct" id="Q12036">
    <property type="molecule type" value="protein"/>
</dbReference>
<dbReference type="GO" id="GO:0005739">
    <property type="term" value="C:mitochondrion"/>
    <property type="evidence" value="ECO:0000315"/>
    <property type="project" value="SGD"/>
</dbReference>
<dbReference type="GO" id="GO:0008897">
    <property type="term" value="F:holo-[acyl-carrier-protein] synthase activity"/>
    <property type="evidence" value="ECO:0000314"/>
    <property type="project" value="SGD"/>
</dbReference>
<dbReference type="GO" id="GO:0000287">
    <property type="term" value="F:magnesium ion binding"/>
    <property type="evidence" value="ECO:0007669"/>
    <property type="project" value="InterPro"/>
</dbReference>
<dbReference type="GO" id="GO:0006633">
    <property type="term" value="P:fatty acid biosynthetic process"/>
    <property type="evidence" value="ECO:0007669"/>
    <property type="project" value="UniProtKB-KW"/>
</dbReference>
<dbReference type="GO" id="GO:0031108">
    <property type="term" value="P:holo-[acyl-carrier-protein] biosynthetic process"/>
    <property type="evidence" value="ECO:0000314"/>
    <property type="project" value="SGD"/>
</dbReference>
<dbReference type="FunFam" id="3.90.470.20:FF:000025">
    <property type="entry name" value="Mitochondrial holo-[acyl-carrier-protein] synthase"/>
    <property type="match status" value="1"/>
</dbReference>
<dbReference type="Gene3D" id="3.90.470.20">
    <property type="entry name" value="4'-phosphopantetheinyl transferase domain"/>
    <property type="match status" value="1"/>
</dbReference>
<dbReference type="InterPro" id="IPR008278">
    <property type="entry name" value="4-PPantetheinyl_Trfase_dom"/>
</dbReference>
<dbReference type="InterPro" id="IPR037143">
    <property type="entry name" value="4-PPantetheinyl_Trfase_dom_sf"/>
</dbReference>
<dbReference type="InterPro" id="IPR016614">
    <property type="entry name" value="PPTase_2"/>
</dbReference>
<dbReference type="Pfam" id="PF01648">
    <property type="entry name" value="ACPS"/>
    <property type="match status" value="1"/>
</dbReference>
<dbReference type="PIRSF" id="PIRSF013370">
    <property type="entry name" value="ACPS_fun"/>
    <property type="match status" value="1"/>
</dbReference>
<dbReference type="SUPFAM" id="SSF56214">
    <property type="entry name" value="4'-phosphopantetheinyl transferase"/>
    <property type="match status" value="1"/>
</dbReference>